<sequence>MFGFLIGVFFDRREESKCEPLVKHAPAIEPEASEAENYPLSSSADDKILAEALDAVETTILGSGSCLHVTDTAAMPPAGDSAAAAVMMGSHSPGDRLMIEALESVEASRGLTHSADTCSQRCSIALSAPQSPQSRVPEGPIMDSGQIFAVSGAGEEENWIDDEDMALCAADLQIDPIGDAQSVGGSTAACLPPSQKEEIRILYATDGYPVVCSLHLLLGQALLQELYVIAYSHVTEPSAHGGGLLRATFYLLAATGCERQRQRVRPVFVCSFTGEAADKTREALREGKPLMVQDVIASLDEAQSLALHEDLIIALGTICSAGKTAAAPGGDERNLSYNYVASTLPGLRRTLASLMLQYETRVVAAFRRKYNASFSCPFWFVSKFGPSETSLVAVLRYYLLGATQDDGIAGSFDLQGVKDLAVTFPKPGANASGLTAARLNTFAEFSRFWCCSELAGPKAEKLFREYLKTRVSSDTLYVQSLDSLIEKYRHALRLPAKDFVRFVYLAYHEGYNRAAVEAHMEEALRNGGRAETAATRAQSEFFKGLREMCSMPEYFARNVDVAVKRLPVRVAEEHARLRSYGEIPRSGFWGFCWPSYDVSLRINKICAGPLCCLGTQLADAMVRAPPDDGDKGTCAETAATIIHHDSDASGEEEATVKVCGAHMPRANKRAGDGTRISPACNEADTRAPLARLTALAYSDQRPRGIMPVTLLLYSLDDTSSGADTAVKSEAKAQDRPVPVYRVAMPGGGQAFAVVARDQWDKTVTVDVFSGFMAPKSPPESNGPLGSDKDAAAVDDAWTRALLARAWGTSYARRCAANVGASQLYLNRNEVLSDSLAVCNLPLDLDITLKPSSVGRPSMLTLHMAMRSVREAIVLLWSLLFADAEIDPDTYPVYFYKTQCDAAAGDEEASPQRRGVGGGDDDVAWGEEDVEIEEMWGGYYSQTAMNDDMIWDDAPDPQMDIDSDHPAHEPMDDGAGAAIEEMKTAAAARFCRCERKIGFRICVPIPKPYALAGLSVAKATSALVQQAIVLQEKFVEALDQFIADYEFVDSGVYSAGRSLRLPFFAKVNARGVMVGRLLPFLVFPPKCRDRSEFVAQHADPNNFHVGAARRDNPAPTLIITSVTVRRDVLAQDNRAHGKPRAGTARLADALAAVGIVPGNQQGTPGDACAVDASWLLDSVAMPALREYIDEHFPRHAAEYRDARTDCIRVYEGRICAALRRGGAGYMSGRRSNFTCLKYQHRGASMQTVIASVVVAVNSQGLPYAALQTRCFATKCGSNELQTQFTVTLSATKDV</sequence>
<protein>
    <recommendedName>
        <fullName evidence="1">DNA primase</fullName>
        <ecNumber evidence="1">2.7.7.-</ecNumber>
    </recommendedName>
</protein>
<comment type="function">
    <text evidence="1">Essential component of the helicase/primase complex. Unwinds the DNA at the replication forks and generates single-stranded DNA for both leading and lagging strand synthesis. The primase initiates primer synthesis and thereby produces large amount of short RNA primers on the lagging strand that the polymerase elongates using dNTPs.</text>
</comment>
<comment type="subunit">
    <text evidence="1">Associates with the helicase and the primase-associated factor to form the helicase-primase factor.</text>
</comment>
<comment type="subcellular location">
    <subcellularLocation>
        <location evidence="1">Host nucleus</location>
    </subcellularLocation>
    <text evidence="1">Requires the presence of the primase associated factor to properly localize in the host cell nucleus.</text>
</comment>
<comment type="similarity">
    <text evidence="1">Belongs to the herpesviridae DNA primase family.</text>
</comment>
<accession>Q6UDM2</accession>
<organism>
    <name type="scientific">Psittacid herpesvirus 1 (isolate Amazon parrot/-/97-0001/1997)</name>
    <name type="common">PsHV-1</name>
    <name type="synonym">Pacheco's disease virus</name>
    <dbReference type="NCBI Taxonomy" id="670426"/>
    <lineage>
        <taxon>Viruses</taxon>
        <taxon>Duplodnaviria</taxon>
        <taxon>Heunggongvirae</taxon>
        <taxon>Peploviricota</taxon>
        <taxon>Herviviricetes</taxon>
        <taxon>Herpesvirales</taxon>
        <taxon>Orthoherpesviridae</taxon>
        <taxon>Alphaherpesvirinae</taxon>
        <taxon>Iltovirus</taxon>
        <taxon>Iltovirus psittacidalpha1</taxon>
        <taxon>Psittacid alphaherpesvirus 1</taxon>
    </lineage>
</organism>
<evidence type="ECO:0000255" key="1">
    <source>
        <dbReference type="HAMAP-Rule" id="MF_04011"/>
    </source>
</evidence>
<keyword id="KW-0235">DNA replication</keyword>
<keyword id="KW-1048">Host nucleus</keyword>
<keyword id="KW-0479">Metal-binding</keyword>
<keyword id="KW-1185">Reference proteome</keyword>
<keyword id="KW-0808">Transferase</keyword>
<keyword id="KW-0862">Zinc</keyword>
<keyword id="KW-0863">Zinc-finger</keyword>
<proteinExistence type="inferred from homology"/>
<name>PRIM_PSHV1</name>
<reference key="1">
    <citation type="journal article" date="2006" name="J. Virol.">
        <title>Psittacid herpesvirus 1 and infectious laryngotracheitis virus: Comparative genome sequence analysis of two avian alphaherpesviruses.</title>
        <authorList>
            <person name="Thureen D.R."/>
            <person name="Keeler C.L. Jr."/>
        </authorList>
    </citation>
    <scope>NUCLEOTIDE SEQUENCE [LARGE SCALE GENOMIC DNA]</scope>
</reference>
<organismHost>
    <name type="scientific">Amazona oratrix</name>
    <name type="common">yellow-headed parrot</name>
    <dbReference type="NCBI Taxonomy" id="152276"/>
</organismHost>
<dbReference type="EC" id="2.7.7.-" evidence="1"/>
<dbReference type="EMBL" id="AY372243">
    <property type="protein sequence ID" value="AAQ73688.1"/>
    <property type="molecule type" value="Genomic_DNA"/>
</dbReference>
<dbReference type="RefSeq" id="NP_944382.1">
    <property type="nucleotide sequence ID" value="NC_005264.1"/>
</dbReference>
<dbReference type="GeneID" id="2656989"/>
<dbReference type="KEGG" id="vg:2656989"/>
<dbReference type="Proteomes" id="UP000006840">
    <property type="component" value="Segment"/>
</dbReference>
<dbReference type="GO" id="GO:0042025">
    <property type="term" value="C:host cell nucleus"/>
    <property type="evidence" value="ECO:0007669"/>
    <property type="project" value="UniProtKB-SubCell"/>
</dbReference>
<dbReference type="GO" id="GO:0003899">
    <property type="term" value="F:DNA-directed RNA polymerase activity"/>
    <property type="evidence" value="ECO:0007669"/>
    <property type="project" value="InterPro"/>
</dbReference>
<dbReference type="GO" id="GO:0008270">
    <property type="term" value="F:zinc ion binding"/>
    <property type="evidence" value="ECO:0007669"/>
    <property type="project" value="UniProtKB-KW"/>
</dbReference>
<dbReference type="GO" id="GO:0039686">
    <property type="term" value="P:bidirectional double-stranded viral DNA replication"/>
    <property type="evidence" value="ECO:0007669"/>
    <property type="project" value="InterPro"/>
</dbReference>
<dbReference type="GO" id="GO:0006260">
    <property type="term" value="P:DNA replication"/>
    <property type="evidence" value="ECO:0007669"/>
    <property type="project" value="UniProtKB-KW"/>
</dbReference>
<dbReference type="HAMAP" id="MF_04011">
    <property type="entry name" value="HSV_PRIM"/>
    <property type="match status" value="1"/>
</dbReference>
<dbReference type="InterPro" id="IPR033685">
    <property type="entry name" value="HSV_PRIM"/>
</dbReference>
<dbReference type="Pfam" id="PF03121">
    <property type="entry name" value="Herpes_UL52"/>
    <property type="match status" value="1"/>
</dbReference>
<feature type="chain" id="PRO_0000406841" description="DNA primase">
    <location>
        <begin position="1"/>
        <end position="1293"/>
    </location>
</feature>
<feature type="zinc finger region" description="CHC2-type" evidence="1">
    <location>
        <begin position="1234"/>
        <end position="1274"/>
    </location>
</feature>
<feature type="site" description="Essential for primase activity" evidence="1">
    <location>
        <position position="843"/>
    </location>
</feature>
<feature type="site" description="Essential for primase activity" evidence="1">
    <location>
        <position position="845"/>
    </location>
</feature>
<gene>
    <name type="primary">UL52</name>
</gene>